<proteinExistence type="inferred from homology"/>
<name>GCH3_METVS</name>
<sequence length="266" mass="29948">MIQITVVQIDNYGPWTVTPNPRRESDLQALQSRLYCDMNLQFGAHKGLAFYTRFDNIIAITNGIDLETHRRIQNSIKNRYPFTVSMAIASAETPYDAQKLATEKLQEYGSAQDEVRKEVLDIANEFVSNGYVQLAHVDINDITGTLTDLETAYDTYLSVQMTKLKLMEELKKYNSMGFFIGGDNFMCPCNGMNEKDFQCMFEDIMESSGIELKAGIGIGKTAEDASNLADIGLEIIREGKTDLQVYKLKQATGETKSSPYNYMCPI</sequence>
<keyword id="KW-0342">GTP-binding</keyword>
<keyword id="KW-0378">Hydrolase</keyword>
<keyword id="KW-0547">Nucleotide-binding</keyword>
<feature type="chain" id="PRO_1000056695" description="GTP cyclohydrolase III">
    <location>
        <begin position="1"/>
        <end position="266"/>
    </location>
</feature>
<accession>A6US18</accession>
<evidence type="ECO:0000255" key="1">
    <source>
        <dbReference type="HAMAP-Rule" id="MF_00608"/>
    </source>
</evidence>
<protein>
    <recommendedName>
        <fullName evidence="1">GTP cyclohydrolase III</fullName>
        <ecNumber evidence="1">3.5.4.29</ecNumber>
    </recommendedName>
</protein>
<comment type="function">
    <text evidence="1">Catalyzes the formation of 2-amino-5-formylamino-6-ribofuranosylamino-4(3H)-pyrimidinone ribonucleotide monophosphate and inorganic phosphate from GTP. Also has an independent pyrophosphate phosphohydrolase activity.</text>
</comment>
<comment type="catalytic activity">
    <reaction evidence="1">
        <text>GTP + 3 H2O = 2-amino-5-formylamino-6-(5-phospho-D-ribosylamino)pyrimidin-4(3H)-one + 2 phosphate + 2 H(+)</text>
        <dbReference type="Rhea" id="RHEA:22468"/>
        <dbReference type="ChEBI" id="CHEBI:15377"/>
        <dbReference type="ChEBI" id="CHEBI:15378"/>
        <dbReference type="ChEBI" id="CHEBI:37565"/>
        <dbReference type="ChEBI" id="CHEBI:43474"/>
        <dbReference type="ChEBI" id="CHEBI:57258"/>
        <dbReference type="EC" id="3.5.4.29"/>
    </reaction>
</comment>
<comment type="similarity">
    <text evidence="1">Belongs to the archaeal-type GTP cyclohydrolase family.</text>
</comment>
<organism>
    <name type="scientific">Methanococcus vannielii (strain ATCC 35089 / DSM 1224 / JCM 13029 / OCM 148 / SB)</name>
    <dbReference type="NCBI Taxonomy" id="406327"/>
    <lineage>
        <taxon>Archaea</taxon>
        <taxon>Methanobacteriati</taxon>
        <taxon>Methanobacteriota</taxon>
        <taxon>Methanomada group</taxon>
        <taxon>Methanococci</taxon>
        <taxon>Methanococcales</taxon>
        <taxon>Methanococcaceae</taxon>
        <taxon>Methanococcus</taxon>
    </lineage>
</organism>
<dbReference type="EC" id="3.5.4.29" evidence="1"/>
<dbReference type="EMBL" id="CP000742">
    <property type="protein sequence ID" value="ABR55290.1"/>
    <property type="molecule type" value="Genomic_DNA"/>
</dbReference>
<dbReference type="RefSeq" id="WP_012066204.1">
    <property type="nucleotide sequence ID" value="NC_009634.1"/>
</dbReference>
<dbReference type="SMR" id="A6US18"/>
<dbReference type="STRING" id="406327.Mevan_1393"/>
<dbReference type="GeneID" id="5324816"/>
<dbReference type="KEGG" id="mvn:Mevan_1393"/>
<dbReference type="eggNOG" id="arCOG04202">
    <property type="taxonomic scope" value="Archaea"/>
</dbReference>
<dbReference type="HOGENOM" id="CLU_080076_0_0_2"/>
<dbReference type="OrthoDB" id="25211at2157"/>
<dbReference type="Proteomes" id="UP000001107">
    <property type="component" value="Chromosome"/>
</dbReference>
<dbReference type="GO" id="GO:0005525">
    <property type="term" value="F:GTP binding"/>
    <property type="evidence" value="ECO:0007669"/>
    <property type="project" value="UniProtKB-KW"/>
</dbReference>
<dbReference type="GO" id="GO:0043740">
    <property type="term" value="F:GTP cyclohydrolase IIa activity"/>
    <property type="evidence" value="ECO:0007669"/>
    <property type="project" value="UniProtKB-EC"/>
</dbReference>
<dbReference type="GO" id="GO:0009058">
    <property type="term" value="P:biosynthetic process"/>
    <property type="evidence" value="ECO:0007669"/>
    <property type="project" value="InterPro"/>
</dbReference>
<dbReference type="Gene3D" id="3.30.70.270">
    <property type="match status" value="1"/>
</dbReference>
<dbReference type="Gene3D" id="3.30.70.1230">
    <property type="entry name" value="Nucleotide cyclase"/>
    <property type="match status" value="1"/>
</dbReference>
<dbReference type="HAMAP" id="MF_00608">
    <property type="entry name" value="GTP_cyclohydro_3"/>
    <property type="match status" value="1"/>
</dbReference>
<dbReference type="InterPro" id="IPR007839">
    <property type="entry name" value="GTP_CycHdrlase_3"/>
</dbReference>
<dbReference type="InterPro" id="IPR029787">
    <property type="entry name" value="Nucleotide_cyclase"/>
</dbReference>
<dbReference type="InterPro" id="IPR043128">
    <property type="entry name" value="Rev_trsase/Diguanyl_cyclase"/>
</dbReference>
<dbReference type="NCBIfam" id="NF002587">
    <property type="entry name" value="PRK02240.1"/>
    <property type="match status" value="1"/>
</dbReference>
<dbReference type="PANTHER" id="PTHR42202">
    <property type="entry name" value="GTP CYCLOHYDROLASE III"/>
    <property type="match status" value="1"/>
</dbReference>
<dbReference type="PANTHER" id="PTHR42202:SF1">
    <property type="entry name" value="GTP CYCLOHYDROLASE III"/>
    <property type="match status" value="1"/>
</dbReference>
<dbReference type="Pfam" id="PF05165">
    <property type="entry name" value="GCH_III"/>
    <property type="match status" value="1"/>
</dbReference>
<dbReference type="PIRSF" id="PIRSF009265">
    <property type="entry name" value="GTP_cyclohydro_3"/>
    <property type="match status" value="1"/>
</dbReference>
<gene>
    <name evidence="1" type="primary">gch3</name>
    <name type="ordered locus">Mevan_1393</name>
</gene>
<reference key="1">
    <citation type="submission" date="2007-06" db="EMBL/GenBank/DDBJ databases">
        <title>Complete sequence of Methanococcus vannielii SB.</title>
        <authorList>
            <consortium name="US DOE Joint Genome Institute"/>
            <person name="Copeland A."/>
            <person name="Lucas S."/>
            <person name="Lapidus A."/>
            <person name="Barry K."/>
            <person name="Glavina del Rio T."/>
            <person name="Dalin E."/>
            <person name="Tice H."/>
            <person name="Pitluck S."/>
            <person name="Chain P."/>
            <person name="Malfatti S."/>
            <person name="Shin M."/>
            <person name="Vergez L."/>
            <person name="Schmutz J."/>
            <person name="Larimer F."/>
            <person name="Land M."/>
            <person name="Hauser L."/>
            <person name="Kyrpides N."/>
            <person name="Anderson I."/>
            <person name="Sieprawska-Lupa M."/>
            <person name="Whitman W.B."/>
            <person name="Richardson P."/>
        </authorList>
    </citation>
    <scope>NUCLEOTIDE SEQUENCE [LARGE SCALE GENOMIC DNA]</scope>
    <source>
        <strain>ATCC 35089 / DSM 1224 / JCM 13029 / OCM 148 / SB</strain>
    </source>
</reference>